<dbReference type="Proteomes" id="UP000887567">
    <property type="component" value="Unplaced"/>
</dbReference>
<dbReference type="Gene3D" id="1.10.100.10">
    <property type="entry name" value="Insulin-like"/>
    <property type="match status" value="1"/>
</dbReference>
<dbReference type="InterPro" id="IPR016179">
    <property type="entry name" value="Insulin-like"/>
</dbReference>
<dbReference type="InterPro" id="IPR036438">
    <property type="entry name" value="Insulin-like_sf"/>
</dbReference>
<dbReference type="InterPro" id="IPR022353">
    <property type="entry name" value="Insulin_CS"/>
</dbReference>
<dbReference type="Pfam" id="PF00049">
    <property type="entry name" value="Insulin"/>
    <property type="match status" value="1"/>
</dbReference>
<dbReference type="SMART" id="SM00078">
    <property type="entry name" value="IlGF"/>
    <property type="match status" value="1"/>
</dbReference>
<dbReference type="SUPFAM" id="SSF56994">
    <property type="entry name" value="Insulin-like"/>
    <property type="match status" value="1"/>
</dbReference>
<dbReference type="PROSITE" id="PS00262">
    <property type="entry name" value="INSULIN"/>
    <property type="match status" value="1"/>
</dbReference>
<comment type="function">
    <text evidence="1 2">Insulin decreases blood glucose concentration (By similarity). May have evolved to activate insulin receptors (INSR) in vertebrates. Molecular docking studies reveals unique interaction with the human insulin receptor. In vivo, insulin-like peptide injection reduces blood glucose levels in two models of zebrafish diabetes (streptozotocin- and glucose-induced). Also shorter swimming distance of zebrafish larvae, an effect which is not observed with human insulin (By similarity).</text>
</comment>
<comment type="subcellular location">
    <subcellularLocation>
        <location evidence="7">Secreted</location>
    </subcellularLocation>
</comment>
<comment type="similarity">
    <text evidence="6">Belongs to the insulin family.</text>
</comment>
<comment type="online information" name="National Center for Biotechnology Information (NCBI)">
    <link uri="https://www.ncbi.nlm.nih.gov/sra/?term=SRP303227"/>
</comment>
<accession>P0DRI0</accession>
<name>INS2_EXADI</name>
<feature type="signal peptide" evidence="3">
    <location>
        <begin position="1"/>
        <end position="22"/>
    </location>
</feature>
<feature type="propeptide" id="PRO_0000461930" evidence="7">
    <location>
        <begin position="23"/>
        <end position="42"/>
    </location>
</feature>
<feature type="chain" id="PRO_0000461931" description="ILP-Ap02 B chain" evidence="7">
    <location>
        <begin position="43"/>
        <end position="61"/>
    </location>
</feature>
<feature type="propeptide" id="PRO_0000461932" description="C peptide" evidence="7">
    <location>
        <begin position="62"/>
        <end position="87"/>
    </location>
</feature>
<feature type="chain" id="PRO_0000461933" description="ILP-Ap02 A chain" evidence="7">
    <location>
        <begin position="88"/>
        <end position="113"/>
    </location>
</feature>
<feature type="disulfide bond" description="Interchain (between B and A chains)" evidence="1">
    <location>
        <begin position="44"/>
        <end position="99"/>
    </location>
</feature>
<feature type="disulfide bond" description="Interchain (between B and A chains)" evidence="1">
    <location>
        <begin position="56"/>
        <end position="112"/>
    </location>
</feature>
<feature type="disulfide bond" evidence="1">
    <location>
        <begin position="98"/>
        <end position="103"/>
    </location>
</feature>
<keyword id="KW-0119">Carbohydrate metabolism</keyword>
<keyword id="KW-1015">Disulfide bond</keyword>
<keyword id="KW-0313">Glucose metabolism</keyword>
<keyword id="KW-0372">Hormone</keyword>
<keyword id="KW-1185">Reference proteome</keyword>
<keyword id="KW-0964">Secreted</keyword>
<keyword id="KW-0732">Signal</keyword>
<protein>
    <recommendedName>
        <fullName evidence="4 5">Insulin-like peptide 02</fullName>
        <shortName evidence="4 5">ILP-Ap02</shortName>
    </recommendedName>
    <component>
        <recommendedName>
            <fullName evidence="4 5">ILP-Ap02 B chain</fullName>
        </recommendedName>
    </component>
    <component>
        <recommendedName>
            <fullName evidence="4 5">ILP-Ap02 A chain</fullName>
        </recommendedName>
    </component>
</protein>
<organism>
    <name type="scientific">Exaiptasia diaphana</name>
    <name type="common">Tropical sea anemone</name>
    <name type="synonym">Aiptasia pulchella</name>
    <dbReference type="NCBI Taxonomy" id="2652724"/>
    <lineage>
        <taxon>Eukaryota</taxon>
        <taxon>Metazoa</taxon>
        <taxon>Cnidaria</taxon>
        <taxon>Anthozoa</taxon>
        <taxon>Hexacorallia</taxon>
        <taxon>Actiniaria</taxon>
        <taxon>Aiptasiidae</taxon>
        <taxon>Exaiptasia</taxon>
    </lineage>
</organism>
<reference key="1">
    <citation type="journal article" date="2022" name="Front. Mar. Sci.">
        <title>Transcriptome sequencing of the pale anemones (Exaiptasia diaphana) revealed functional peptide gene resources of sea anemone.</title>
        <authorList>
            <person name="Fu J."/>
            <person name="He Y."/>
            <person name="Peng C."/>
            <person name="Tang T."/>
            <person name="Jin A."/>
            <person name="Liao Y."/>
            <person name="Shi Q."/>
            <person name="Gao B."/>
        </authorList>
    </citation>
    <scope>NUCLEOTIDE SEQUENCE [LARGE SCALE MRNA]</scope>
</reference>
<reference key="2">
    <citation type="journal article" date="2024" name="Mar. Drugs">
        <title>Synthesis and hypoglycemic effect of insulin from the venom of sea anemone Exaiptasia diaphana.</title>
        <authorList>
            <person name="Guo Q."/>
            <person name="Tang T."/>
            <person name="Lu J."/>
            <person name="Huang M."/>
            <person name="Zhang J."/>
            <person name="Ma L."/>
            <person name="Gao B."/>
        </authorList>
    </citation>
    <scope>3D-STRUCTURE MODELING</scope>
</reference>
<sequence length="113" mass="13269">MFYLTFLLFGAICIGQIQLGQPVKFKVNEDGHRPSVYPIKYRVCGWEIFARYLAICHIRQRRRKRSIEADIITDKDTANSYFNRVKRGSGRFNIVEECCLEGCIPEEIREYCP</sequence>
<proteinExistence type="inferred from homology"/>
<evidence type="ECO:0000250" key="1">
    <source>
        <dbReference type="UniProtKB" id="P01308"/>
    </source>
</evidence>
<evidence type="ECO:0000250" key="2">
    <source>
        <dbReference type="UniProtKB" id="P0DRI2"/>
    </source>
</evidence>
<evidence type="ECO:0000255" key="3"/>
<evidence type="ECO:0000303" key="4">
    <source>
    </source>
</evidence>
<evidence type="ECO:0000303" key="5">
    <source ref="1"/>
</evidence>
<evidence type="ECO:0000305" key="6"/>
<evidence type="ECO:0000305" key="7">
    <source ref="1"/>
</evidence>